<organism>
    <name type="scientific">Methanobrevibacter smithii (strain ATCC 35061 / DSM 861 / OCM 144 / PS)</name>
    <dbReference type="NCBI Taxonomy" id="420247"/>
    <lineage>
        <taxon>Archaea</taxon>
        <taxon>Methanobacteriati</taxon>
        <taxon>Methanobacteriota</taxon>
        <taxon>Methanomada group</taxon>
        <taxon>Methanobacteria</taxon>
        <taxon>Methanobacteriales</taxon>
        <taxon>Methanobacteriaceae</taxon>
        <taxon>Methanobrevibacter</taxon>
    </lineage>
</organism>
<protein>
    <recommendedName>
        <fullName evidence="1">Peptide chain release factor subunit 1</fullName>
    </recommendedName>
    <alternativeName>
        <fullName evidence="1">Translation termination factor aRF1</fullName>
    </alternativeName>
</protein>
<comment type="function">
    <text evidence="1">Directs the termination of nascent peptide synthesis (translation) in response to the termination codons UAA, UAG and UGA.</text>
</comment>
<comment type="subunit">
    <text evidence="1">Heterodimer of two subunits, one of which binds GTP.</text>
</comment>
<comment type="subcellular location">
    <subcellularLocation>
        <location evidence="1">Cytoplasm</location>
    </subcellularLocation>
</comment>
<comment type="similarity">
    <text evidence="1">Belongs to the eukaryotic release factor 1 family.</text>
</comment>
<dbReference type="EMBL" id="CP000678">
    <property type="protein sequence ID" value="ABQ87096.1"/>
    <property type="molecule type" value="Genomic_DNA"/>
</dbReference>
<dbReference type="RefSeq" id="WP_011954153.1">
    <property type="nucleotide sequence ID" value="NZ_CP117965.1"/>
</dbReference>
<dbReference type="SMR" id="A5ULL8"/>
<dbReference type="STRING" id="420247.Msm_0891"/>
<dbReference type="EnsemblBacteria" id="ABQ87096">
    <property type="protein sequence ID" value="ABQ87096"/>
    <property type="gene ID" value="Msm_0891"/>
</dbReference>
<dbReference type="GeneID" id="78817524"/>
<dbReference type="KEGG" id="msi:Msm_0891"/>
<dbReference type="PATRIC" id="fig|420247.28.peg.888"/>
<dbReference type="eggNOG" id="arCOG01742">
    <property type="taxonomic scope" value="Archaea"/>
</dbReference>
<dbReference type="HOGENOM" id="CLU_035759_3_0_2"/>
<dbReference type="Proteomes" id="UP000001992">
    <property type="component" value="Chromosome"/>
</dbReference>
<dbReference type="GO" id="GO:0005737">
    <property type="term" value="C:cytoplasm"/>
    <property type="evidence" value="ECO:0007669"/>
    <property type="project" value="UniProtKB-SubCell"/>
</dbReference>
<dbReference type="GO" id="GO:0016149">
    <property type="term" value="F:translation release factor activity, codon specific"/>
    <property type="evidence" value="ECO:0007669"/>
    <property type="project" value="UniProtKB-UniRule"/>
</dbReference>
<dbReference type="FunFam" id="3.30.1330.30:FF:000032">
    <property type="entry name" value="Eukaryotic peptide chain release factor subunit 1"/>
    <property type="match status" value="1"/>
</dbReference>
<dbReference type="FunFam" id="3.30.420.60:FF:000003">
    <property type="entry name" value="Peptide chain release factor subunit 1"/>
    <property type="match status" value="1"/>
</dbReference>
<dbReference type="FunFam" id="3.30.960.10:FF:000003">
    <property type="entry name" value="Peptide chain release factor subunit 1"/>
    <property type="match status" value="1"/>
</dbReference>
<dbReference type="Gene3D" id="3.30.1330.30">
    <property type="match status" value="1"/>
</dbReference>
<dbReference type="Gene3D" id="3.30.960.10">
    <property type="entry name" value="eRF1 domain 1"/>
    <property type="match status" value="1"/>
</dbReference>
<dbReference type="Gene3D" id="3.30.420.60">
    <property type="entry name" value="eRF1 domain 2"/>
    <property type="match status" value="1"/>
</dbReference>
<dbReference type="HAMAP" id="MF_00424">
    <property type="entry name" value="Rel_fact_arch_1"/>
    <property type="match status" value="1"/>
</dbReference>
<dbReference type="InterPro" id="IPR042226">
    <property type="entry name" value="eFR1_2_sf"/>
</dbReference>
<dbReference type="InterPro" id="IPR005140">
    <property type="entry name" value="eRF1_1_Pelota"/>
</dbReference>
<dbReference type="InterPro" id="IPR024049">
    <property type="entry name" value="eRF1_1_sf"/>
</dbReference>
<dbReference type="InterPro" id="IPR005141">
    <property type="entry name" value="eRF1_2"/>
</dbReference>
<dbReference type="InterPro" id="IPR005142">
    <property type="entry name" value="eRF1_3"/>
</dbReference>
<dbReference type="InterPro" id="IPR020918">
    <property type="entry name" value="Peptide_chain-rel_aRF1"/>
</dbReference>
<dbReference type="InterPro" id="IPR004403">
    <property type="entry name" value="Peptide_chain-rel_eRF1/aRF1"/>
</dbReference>
<dbReference type="InterPro" id="IPR029064">
    <property type="entry name" value="Ribosomal_eL30-like_sf"/>
</dbReference>
<dbReference type="NCBIfam" id="TIGR03676">
    <property type="entry name" value="aRF1_eRF1"/>
    <property type="match status" value="1"/>
</dbReference>
<dbReference type="PANTHER" id="PTHR10113">
    <property type="entry name" value="PEPTIDE CHAIN RELEASE FACTOR SUBUNIT 1"/>
    <property type="match status" value="1"/>
</dbReference>
<dbReference type="Pfam" id="PF03463">
    <property type="entry name" value="eRF1_1"/>
    <property type="match status" value="1"/>
</dbReference>
<dbReference type="Pfam" id="PF03464">
    <property type="entry name" value="eRF1_2"/>
    <property type="match status" value="1"/>
</dbReference>
<dbReference type="Pfam" id="PF03465">
    <property type="entry name" value="eRF1_3"/>
    <property type="match status" value="1"/>
</dbReference>
<dbReference type="SMART" id="SM01194">
    <property type="entry name" value="eRF1_1"/>
    <property type="match status" value="1"/>
</dbReference>
<dbReference type="SUPFAM" id="SSF55315">
    <property type="entry name" value="L30e-like"/>
    <property type="match status" value="1"/>
</dbReference>
<dbReference type="SUPFAM" id="SSF55481">
    <property type="entry name" value="N-terminal domain of eukaryotic peptide chain release factor subunit 1, ERF1"/>
    <property type="match status" value="1"/>
</dbReference>
<dbReference type="SUPFAM" id="SSF53137">
    <property type="entry name" value="Translational machinery components"/>
    <property type="match status" value="1"/>
</dbReference>
<keyword id="KW-0963">Cytoplasm</keyword>
<keyword id="KW-0648">Protein biosynthesis</keyword>
<sequence length="412" mass="46509">MAEVSSKELYKFKKTLKELSEKKGRGTELVSVYIPHDKQISDVGKQMRDELGQSANIKSKQTRKNVQSAIEVIMQRIRLFKAAPENGLVLFVGMIPRGGPGTEKMETYVFEPPEPITTYWYQCNNEFFLEPLEYMIEERETYGLAVIDRKEATIATLRGKKVNILNHLTSGVPGKHKAGGQSQRRFDRVIDLAAHEFKKRIGEHMNEDFLALEELEGVIIGGPGFTKEEFVKGDYLNYEIKDKIIATVDTSYTGEFGIREVIDKSADILNDLDVMQEKKVVQKFLHELVKDKGLASYGEREVRTNLIMGAVDTLLLSEDLTAMRKVFKCPSCGNEEEITVKSQSEADKLEKPCSNCGEILKEESSQTLIEDFVEKAEEMNSEVELISTETEEGMQLLRAFGGVAAILRYHVG</sequence>
<reference key="1">
    <citation type="journal article" date="2007" name="Proc. Natl. Acad. Sci. U.S.A.">
        <title>Genomic and metabolic adaptations of Methanobrevibacter smithii to the human gut.</title>
        <authorList>
            <person name="Samuel B.S."/>
            <person name="Hansen E.E."/>
            <person name="Manchester J.K."/>
            <person name="Coutinho P.M."/>
            <person name="Henrissat B."/>
            <person name="Fulton R."/>
            <person name="Latreille P."/>
            <person name="Kim K."/>
            <person name="Wilson R.K."/>
            <person name="Gordon J.I."/>
        </authorList>
    </citation>
    <scope>NUCLEOTIDE SEQUENCE [LARGE SCALE GENOMIC DNA]</scope>
    <source>
        <strain>ATCC 35061 / DSM 861 / OCM 144 / PS</strain>
    </source>
</reference>
<evidence type="ECO:0000255" key="1">
    <source>
        <dbReference type="HAMAP-Rule" id="MF_00424"/>
    </source>
</evidence>
<feature type="chain" id="PRO_1000060106" description="Peptide chain release factor subunit 1">
    <location>
        <begin position="1"/>
        <end position="412"/>
    </location>
</feature>
<proteinExistence type="inferred from homology"/>
<name>RF1_METS3</name>
<accession>A5ULL8</accession>
<gene>
    <name evidence="1" type="primary">prf1</name>
    <name type="ordered locus">Msm_0891</name>
</gene>